<accession>B7MW64</accession>
<evidence type="ECO:0000255" key="1">
    <source>
        <dbReference type="HAMAP-Rule" id="MF_01589"/>
    </source>
</evidence>
<proteinExistence type="inferred from homology"/>
<comment type="function">
    <text evidence="1">Catalyzes the conversion of S-adenosyl-L-methionine (SAM) to carboxy-S-adenosyl-L-methionine (Cx-SAM).</text>
</comment>
<comment type="catalytic activity">
    <reaction evidence="1">
        <text>prephenate + S-adenosyl-L-methionine = carboxy-S-adenosyl-L-methionine + 3-phenylpyruvate + H2O</text>
        <dbReference type="Rhea" id="RHEA:51692"/>
        <dbReference type="ChEBI" id="CHEBI:15377"/>
        <dbReference type="ChEBI" id="CHEBI:18005"/>
        <dbReference type="ChEBI" id="CHEBI:29934"/>
        <dbReference type="ChEBI" id="CHEBI:59789"/>
        <dbReference type="ChEBI" id="CHEBI:134278"/>
    </reaction>
</comment>
<comment type="subunit">
    <text evidence="1">Homodimer.</text>
</comment>
<comment type="similarity">
    <text evidence="1">Belongs to the class I-like SAM-binding methyltransferase superfamily. Cx-SAM synthase family.</text>
</comment>
<organism>
    <name type="scientific">Escherichia coli O81 (strain ED1a)</name>
    <dbReference type="NCBI Taxonomy" id="585397"/>
    <lineage>
        <taxon>Bacteria</taxon>
        <taxon>Pseudomonadati</taxon>
        <taxon>Pseudomonadota</taxon>
        <taxon>Gammaproteobacteria</taxon>
        <taxon>Enterobacterales</taxon>
        <taxon>Enterobacteriaceae</taxon>
        <taxon>Escherichia</taxon>
    </lineage>
</organism>
<sequence>MSHRDTLFSAPIARLGDWTFDERVAEVFPDMIQRSVPGYSNIISMIGMLAERFVQPGTQVYDLGCSLGAATLSVRRNIHHDNCKIIAIDNSPAMIERCRRHIDAYKAPTPVDVIEGDIRDIAIENASMVVLNFTLQFLEPSERQALLDKIYQGLNPGGALVLSEKFSFEDAKVGELLFNMHHDFKRANGYSELEISQKRSMLENVMLTDSVETHKARLHKAGFEHSELWFQCFNFGSLVALKAEDAA</sequence>
<name>CMOA_ECO81</name>
<keyword id="KW-0949">S-adenosyl-L-methionine</keyword>
<keyword id="KW-0808">Transferase</keyword>
<reference key="1">
    <citation type="journal article" date="2009" name="PLoS Genet.">
        <title>Organised genome dynamics in the Escherichia coli species results in highly diverse adaptive paths.</title>
        <authorList>
            <person name="Touchon M."/>
            <person name="Hoede C."/>
            <person name="Tenaillon O."/>
            <person name="Barbe V."/>
            <person name="Baeriswyl S."/>
            <person name="Bidet P."/>
            <person name="Bingen E."/>
            <person name="Bonacorsi S."/>
            <person name="Bouchier C."/>
            <person name="Bouvet O."/>
            <person name="Calteau A."/>
            <person name="Chiapello H."/>
            <person name="Clermont O."/>
            <person name="Cruveiller S."/>
            <person name="Danchin A."/>
            <person name="Diard M."/>
            <person name="Dossat C."/>
            <person name="Karoui M.E."/>
            <person name="Frapy E."/>
            <person name="Garry L."/>
            <person name="Ghigo J.M."/>
            <person name="Gilles A.M."/>
            <person name="Johnson J."/>
            <person name="Le Bouguenec C."/>
            <person name="Lescat M."/>
            <person name="Mangenot S."/>
            <person name="Martinez-Jehanne V."/>
            <person name="Matic I."/>
            <person name="Nassif X."/>
            <person name="Oztas S."/>
            <person name="Petit M.A."/>
            <person name="Pichon C."/>
            <person name="Rouy Z."/>
            <person name="Ruf C.S."/>
            <person name="Schneider D."/>
            <person name="Tourret J."/>
            <person name="Vacherie B."/>
            <person name="Vallenet D."/>
            <person name="Medigue C."/>
            <person name="Rocha E.P.C."/>
            <person name="Denamur E."/>
        </authorList>
    </citation>
    <scope>NUCLEOTIDE SEQUENCE [LARGE SCALE GENOMIC DNA]</scope>
    <source>
        <strain>ED1a</strain>
    </source>
</reference>
<dbReference type="EC" id="2.1.3.-" evidence="1"/>
<dbReference type="EMBL" id="CU928162">
    <property type="protein sequence ID" value="CAR08330.2"/>
    <property type="molecule type" value="Genomic_DNA"/>
</dbReference>
<dbReference type="RefSeq" id="WP_000019588.1">
    <property type="nucleotide sequence ID" value="NC_011745.1"/>
</dbReference>
<dbReference type="SMR" id="B7MW64"/>
<dbReference type="GeneID" id="75202724"/>
<dbReference type="KEGG" id="ecq:ECED1_2139"/>
<dbReference type="HOGENOM" id="CLU_078475_0_0_6"/>
<dbReference type="Proteomes" id="UP000000748">
    <property type="component" value="Chromosome"/>
</dbReference>
<dbReference type="GO" id="GO:0016743">
    <property type="term" value="F:carboxyl- or carbamoyltransferase activity"/>
    <property type="evidence" value="ECO:0007669"/>
    <property type="project" value="UniProtKB-UniRule"/>
</dbReference>
<dbReference type="GO" id="GO:1904047">
    <property type="term" value="F:S-adenosyl-L-methionine binding"/>
    <property type="evidence" value="ECO:0007669"/>
    <property type="project" value="UniProtKB-UniRule"/>
</dbReference>
<dbReference type="GO" id="GO:0002098">
    <property type="term" value="P:tRNA wobble uridine modification"/>
    <property type="evidence" value="ECO:0007669"/>
    <property type="project" value="InterPro"/>
</dbReference>
<dbReference type="CDD" id="cd02440">
    <property type="entry name" value="AdoMet_MTases"/>
    <property type="match status" value="1"/>
</dbReference>
<dbReference type="FunFam" id="3.40.50.150:FF:000030">
    <property type="entry name" value="Carboxy-S-adenosyl-L-methionine synthase"/>
    <property type="match status" value="1"/>
</dbReference>
<dbReference type="Gene3D" id="3.40.50.150">
    <property type="entry name" value="Vaccinia Virus protein VP39"/>
    <property type="match status" value="1"/>
</dbReference>
<dbReference type="HAMAP" id="MF_01589">
    <property type="entry name" value="Cx_SAM_synthase"/>
    <property type="match status" value="1"/>
</dbReference>
<dbReference type="InterPro" id="IPR005271">
    <property type="entry name" value="CmoA"/>
</dbReference>
<dbReference type="InterPro" id="IPR041698">
    <property type="entry name" value="Methyltransf_25"/>
</dbReference>
<dbReference type="InterPro" id="IPR029063">
    <property type="entry name" value="SAM-dependent_MTases_sf"/>
</dbReference>
<dbReference type="NCBIfam" id="TIGR00740">
    <property type="entry name" value="carboxy-S-adenosyl-L-methionine synthase CmoA"/>
    <property type="match status" value="1"/>
</dbReference>
<dbReference type="NCBIfam" id="NF011995">
    <property type="entry name" value="PRK15451.1"/>
    <property type="match status" value="1"/>
</dbReference>
<dbReference type="PANTHER" id="PTHR43861:SF2">
    <property type="entry name" value="CARBOXY-S-ADENOSYL-L-METHIONINE SYNTHASE"/>
    <property type="match status" value="1"/>
</dbReference>
<dbReference type="PANTHER" id="PTHR43861">
    <property type="entry name" value="TRANS-ACONITATE 2-METHYLTRANSFERASE-RELATED"/>
    <property type="match status" value="1"/>
</dbReference>
<dbReference type="Pfam" id="PF13649">
    <property type="entry name" value="Methyltransf_25"/>
    <property type="match status" value="1"/>
</dbReference>
<dbReference type="PIRSF" id="PIRSF006325">
    <property type="entry name" value="MeTrfase_bac"/>
    <property type="match status" value="1"/>
</dbReference>
<dbReference type="SUPFAM" id="SSF53335">
    <property type="entry name" value="S-adenosyl-L-methionine-dependent methyltransferases"/>
    <property type="match status" value="1"/>
</dbReference>
<feature type="chain" id="PRO_1000185685" description="Carboxy-S-adenosyl-L-methionine synthase">
    <location>
        <begin position="1"/>
        <end position="247"/>
    </location>
</feature>
<feature type="binding site" evidence="1">
    <location>
        <position position="39"/>
    </location>
    <ligand>
        <name>S-adenosyl-L-methionine</name>
        <dbReference type="ChEBI" id="CHEBI:59789"/>
    </ligand>
</feature>
<feature type="binding site" evidence="1">
    <location>
        <begin position="64"/>
        <end position="66"/>
    </location>
    <ligand>
        <name>S-adenosyl-L-methionine</name>
        <dbReference type="ChEBI" id="CHEBI:59789"/>
    </ligand>
</feature>
<feature type="binding site" evidence="1">
    <location>
        <begin position="89"/>
        <end position="90"/>
    </location>
    <ligand>
        <name>S-adenosyl-L-methionine</name>
        <dbReference type="ChEBI" id="CHEBI:59789"/>
    </ligand>
</feature>
<feature type="binding site" evidence="1">
    <location>
        <begin position="117"/>
        <end position="118"/>
    </location>
    <ligand>
        <name>S-adenosyl-L-methionine</name>
        <dbReference type="ChEBI" id="CHEBI:59789"/>
    </ligand>
</feature>
<feature type="binding site" evidence="1">
    <location>
        <position position="132"/>
    </location>
    <ligand>
        <name>S-adenosyl-L-methionine</name>
        <dbReference type="ChEBI" id="CHEBI:59789"/>
    </ligand>
</feature>
<feature type="binding site" evidence="1">
    <location>
        <position position="199"/>
    </location>
    <ligand>
        <name>S-adenosyl-L-methionine</name>
        <dbReference type="ChEBI" id="CHEBI:59789"/>
    </ligand>
</feature>
<gene>
    <name evidence="1" type="primary">cmoA</name>
    <name type="ordered locus">ECED1_2139</name>
</gene>
<protein>
    <recommendedName>
        <fullName evidence="1">Carboxy-S-adenosyl-L-methionine synthase</fullName>
        <shortName evidence="1">Cx-SAM synthase</shortName>
        <ecNumber evidence="1">2.1.3.-</ecNumber>
    </recommendedName>
</protein>